<gene>
    <name evidence="1" type="primary">pstB1</name>
    <name type="ordered locus">PSPPH_3015</name>
</gene>
<accession>Q48HD9</accession>
<name>PSTB1_PSE14</name>
<organism>
    <name type="scientific">Pseudomonas savastanoi pv. phaseolicola (strain 1448A / Race 6)</name>
    <name type="common">Pseudomonas syringae pv. phaseolicola (strain 1448A / Race 6)</name>
    <dbReference type="NCBI Taxonomy" id="264730"/>
    <lineage>
        <taxon>Bacteria</taxon>
        <taxon>Pseudomonadati</taxon>
        <taxon>Pseudomonadota</taxon>
        <taxon>Gammaproteobacteria</taxon>
        <taxon>Pseudomonadales</taxon>
        <taxon>Pseudomonadaceae</taxon>
        <taxon>Pseudomonas</taxon>
    </lineage>
</organism>
<sequence>MNNLSLANEKTKIQVRGLEFFYNNQKSLKSIDMTIPEKRITAIIGPSGCGKSTLLRVFNRIYAMYPKQEARGEVLLNGENILAPGYSMNRLRSHVGMVFQKPVPFPMSIFDNISYAIKHHEKLSRREMEDRVEQALRGAALWDEVKDKLKQSATGLSGGQQQRLCIARTIALRPQVLLLDEPTSALDPISTGRIEQLITELKEQFTVIIVTHNMQQAARCSDYTAFMFMGELIEHGDTDTIFTKPSKTQTEDYITGRFG</sequence>
<proteinExistence type="inferred from homology"/>
<feature type="chain" id="PRO_0000272499" description="Phosphate import ATP-binding protein PstB 1">
    <location>
        <begin position="1"/>
        <end position="259"/>
    </location>
</feature>
<feature type="domain" description="ABC transporter" evidence="1">
    <location>
        <begin position="13"/>
        <end position="254"/>
    </location>
</feature>
<feature type="binding site" evidence="1">
    <location>
        <begin position="45"/>
        <end position="52"/>
    </location>
    <ligand>
        <name>ATP</name>
        <dbReference type="ChEBI" id="CHEBI:30616"/>
    </ligand>
</feature>
<comment type="function">
    <text evidence="1">Part of the ABC transporter complex PstSACB involved in phosphate import. Responsible for energy coupling to the transport system.</text>
</comment>
<comment type="catalytic activity">
    <reaction evidence="1">
        <text>phosphate(out) + ATP + H2O = ADP + 2 phosphate(in) + H(+)</text>
        <dbReference type="Rhea" id="RHEA:24440"/>
        <dbReference type="ChEBI" id="CHEBI:15377"/>
        <dbReference type="ChEBI" id="CHEBI:15378"/>
        <dbReference type="ChEBI" id="CHEBI:30616"/>
        <dbReference type="ChEBI" id="CHEBI:43474"/>
        <dbReference type="ChEBI" id="CHEBI:456216"/>
        <dbReference type="EC" id="7.3.2.1"/>
    </reaction>
</comment>
<comment type="subunit">
    <text evidence="1">The complex is composed of two ATP-binding proteins (PstB), two transmembrane proteins (PstC and PstA) and a solute-binding protein (PstS).</text>
</comment>
<comment type="subcellular location">
    <subcellularLocation>
        <location evidence="1">Cell inner membrane</location>
        <topology evidence="1">Peripheral membrane protein</topology>
    </subcellularLocation>
</comment>
<comment type="similarity">
    <text evidence="1">Belongs to the ABC transporter superfamily. Phosphate importer (TC 3.A.1.7) family.</text>
</comment>
<dbReference type="EC" id="7.3.2.1" evidence="1"/>
<dbReference type="EMBL" id="CP000058">
    <property type="protein sequence ID" value="AAZ33521.1"/>
    <property type="molecule type" value="Genomic_DNA"/>
</dbReference>
<dbReference type="SMR" id="Q48HD9"/>
<dbReference type="KEGG" id="psp:PSPPH_3015"/>
<dbReference type="eggNOG" id="COG1117">
    <property type="taxonomic scope" value="Bacteria"/>
</dbReference>
<dbReference type="HOGENOM" id="CLU_000604_1_22_6"/>
<dbReference type="Proteomes" id="UP000000551">
    <property type="component" value="Chromosome"/>
</dbReference>
<dbReference type="GO" id="GO:0005886">
    <property type="term" value="C:plasma membrane"/>
    <property type="evidence" value="ECO:0007669"/>
    <property type="project" value="UniProtKB-SubCell"/>
</dbReference>
<dbReference type="GO" id="GO:0005524">
    <property type="term" value="F:ATP binding"/>
    <property type="evidence" value="ECO:0007669"/>
    <property type="project" value="UniProtKB-KW"/>
</dbReference>
<dbReference type="GO" id="GO:0016887">
    <property type="term" value="F:ATP hydrolysis activity"/>
    <property type="evidence" value="ECO:0007669"/>
    <property type="project" value="InterPro"/>
</dbReference>
<dbReference type="GO" id="GO:0015415">
    <property type="term" value="F:ATPase-coupled phosphate ion transmembrane transporter activity"/>
    <property type="evidence" value="ECO:0007669"/>
    <property type="project" value="UniProtKB-EC"/>
</dbReference>
<dbReference type="GO" id="GO:0035435">
    <property type="term" value="P:phosphate ion transmembrane transport"/>
    <property type="evidence" value="ECO:0007669"/>
    <property type="project" value="InterPro"/>
</dbReference>
<dbReference type="CDD" id="cd03260">
    <property type="entry name" value="ABC_PstB_phosphate_transporter"/>
    <property type="match status" value="1"/>
</dbReference>
<dbReference type="FunFam" id="3.40.50.300:FF:000132">
    <property type="entry name" value="Phosphate import ATP-binding protein PstB"/>
    <property type="match status" value="1"/>
</dbReference>
<dbReference type="Gene3D" id="3.40.50.300">
    <property type="entry name" value="P-loop containing nucleotide triphosphate hydrolases"/>
    <property type="match status" value="1"/>
</dbReference>
<dbReference type="InterPro" id="IPR003593">
    <property type="entry name" value="AAA+_ATPase"/>
</dbReference>
<dbReference type="InterPro" id="IPR003439">
    <property type="entry name" value="ABC_transporter-like_ATP-bd"/>
</dbReference>
<dbReference type="InterPro" id="IPR017871">
    <property type="entry name" value="ABC_transporter-like_CS"/>
</dbReference>
<dbReference type="InterPro" id="IPR027417">
    <property type="entry name" value="P-loop_NTPase"/>
</dbReference>
<dbReference type="InterPro" id="IPR005670">
    <property type="entry name" value="PstB-like"/>
</dbReference>
<dbReference type="NCBIfam" id="TIGR00972">
    <property type="entry name" value="3a0107s01c2"/>
    <property type="match status" value="1"/>
</dbReference>
<dbReference type="PANTHER" id="PTHR43423">
    <property type="entry name" value="ABC TRANSPORTER I FAMILY MEMBER 17"/>
    <property type="match status" value="1"/>
</dbReference>
<dbReference type="PANTHER" id="PTHR43423:SF3">
    <property type="entry name" value="PHOSPHATE IMPORT ATP-BINDING PROTEIN PSTB"/>
    <property type="match status" value="1"/>
</dbReference>
<dbReference type="Pfam" id="PF00005">
    <property type="entry name" value="ABC_tran"/>
    <property type="match status" value="1"/>
</dbReference>
<dbReference type="SMART" id="SM00382">
    <property type="entry name" value="AAA"/>
    <property type="match status" value="1"/>
</dbReference>
<dbReference type="SUPFAM" id="SSF52540">
    <property type="entry name" value="P-loop containing nucleoside triphosphate hydrolases"/>
    <property type="match status" value="1"/>
</dbReference>
<dbReference type="PROSITE" id="PS00211">
    <property type="entry name" value="ABC_TRANSPORTER_1"/>
    <property type="match status" value="1"/>
</dbReference>
<dbReference type="PROSITE" id="PS50893">
    <property type="entry name" value="ABC_TRANSPORTER_2"/>
    <property type="match status" value="1"/>
</dbReference>
<dbReference type="PROSITE" id="PS51238">
    <property type="entry name" value="PSTB"/>
    <property type="match status" value="1"/>
</dbReference>
<reference key="1">
    <citation type="journal article" date="2005" name="J. Bacteriol.">
        <title>Whole-genome sequence analysis of Pseudomonas syringae pv. phaseolicola 1448A reveals divergence among pathovars in genes involved in virulence and transposition.</title>
        <authorList>
            <person name="Joardar V."/>
            <person name="Lindeberg M."/>
            <person name="Jackson R.W."/>
            <person name="Selengut J."/>
            <person name="Dodson R."/>
            <person name="Brinkac L.M."/>
            <person name="Daugherty S.C."/>
            <person name="DeBoy R.T."/>
            <person name="Durkin A.S."/>
            <person name="Gwinn Giglio M."/>
            <person name="Madupu R."/>
            <person name="Nelson W.C."/>
            <person name="Rosovitz M.J."/>
            <person name="Sullivan S.A."/>
            <person name="Crabtree J."/>
            <person name="Creasy T."/>
            <person name="Davidsen T.M."/>
            <person name="Haft D.H."/>
            <person name="Zafar N."/>
            <person name="Zhou L."/>
            <person name="Halpin R."/>
            <person name="Holley T."/>
            <person name="Khouri H.M."/>
            <person name="Feldblyum T.V."/>
            <person name="White O."/>
            <person name="Fraser C.M."/>
            <person name="Chatterjee A.K."/>
            <person name="Cartinhour S."/>
            <person name="Schneider D."/>
            <person name="Mansfield J.W."/>
            <person name="Collmer A."/>
            <person name="Buell R."/>
        </authorList>
    </citation>
    <scope>NUCLEOTIDE SEQUENCE [LARGE SCALE GENOMIC DNA]</scope>
    <source>
        <strain>1448A / Race 6</strain>
    </source>
</reference>
<evidence type="ECO:0000255" key="1">
    <source>
        <dbReference type="HAMAP-Rule" id="MF_01702"/>
    </source>
</evidence>
<keyword id="KW-0067">ATP-binding</keyword>
<keyword id="KW-0997">Cell inner membrane</keyword>
<keyword id="KW-1003">Cell membrane</keyword>
<keyword id="KW-0472">Membrane</keyword>
<keyword id="KW-0547">Nucleotide-binding</keyword>
<keyword id="KW-0592">Phosphate transport</keyword>
<keyword id="KW-1278">Translocase</keyword>
<keyword id="KW-0813">Transport</keyword>
<protein>
    <recommendedName>
        <fullName evidence="1">Phosphate import ATP-binding protein PstB 1</fullName>
        <ecNumber evidence="1">7.3.2.1</ecNumber>
    </recommendedName>
    <alternativeName>
        <fullName evidence="1">ABC phosphate transporter 1</fullName>
    </alternativeName>
    <alternativeName>
        <fullName evidence="1">Phosphate-transporting ATPase 1</fullName>
    </alternativeName>
</protein>